<feature type="chain" id="PRO_0000406715" description="Pentafunctional AROM polypeptide">
    <location>
        <begin position="1"/>
        <end position="1677"/>
    </location>
</feature>
<feature type="region of interest" description="3-dehydroquinate synthase">
    <location>
        <begin position="1"/>
        <end position="394"/>
    </location>
</feature>
<feature type="region of interest" description="EPSP synthase">
    <location>
        <begin position="407"/>
        <end position="858"/>
    </location>
</feature>
<feature type="region of interest" description="Shikimate kinase">
    <location>
        <begin position="885"/>
        <end position="1113"/>
    </location>
</feature>
<feature type="region of interest" description="3-dehydroquinase">
    <location>
        <begin position="1114"/>
        <end position="1341"/>
    </location>
</feature>
<feature type="region of interest" description="Shikimate dehydrogenase">
    <location>
        <begin position="1354"/>
        <end position="1677"/>
    </location>
</feature>
<feature type="active site" description="Proton acceptor; for 3-dehydroquinate synthase activity" evidence="1">
    <location>
        <position position="270"/>
    </location>
</feature>
<feature type="active site" description="Proton acceptor; for 3-dehydroquinate synthase activity" evidence="1">
    <location>
        <position position="285"/>
    </location>
</feature>
<feature type="active site" description="For EPSP synthase activity" evidence="1">
    <location>
        <position position="840"/>
    </location>
</feature>
<feature type="active site" description="Proton acceptor; for 3-dehydroquinate dehydratase activity" evidence="1">
    <location>
        <position position="1243"/>
    </location>
</feature>
<feature type="active site" description="Schiff-base intermediate with substrate; for 3-dehydroquinate dehydratase activity" evidence="1">
    <location>
        <position position="1271"/>
    </location>
</feature>
<feature type="binding site" evidence="1">
    <location>
        <begin position="50"/>
        <end position="52"/>
    </location>
    <ligand>
        <name>NAD(+)</name>
        <dbReference type="ChEBI" id="CHEBI:57540"/>
    </ligand>
</feature>
<feature type="binding site" evidence="1">
    <location>
        <begin position="89"/>
        <end position="92"/>
    </location>
    <ligand>
        <name>NAD(+)</name>
        <dbReference type="ChEBI" id="CHEBI:57540"/>
    </ligand>
</feature>
<feature type="binding site" evidence="1">
    <location>
        <begin position="120"/>
        <end position="122"/>
    </location>
    <ligand>
        <name>NAD(+)</name>
        <dbReference type="ChEBI" id="CHEBI:57540"/>
    </ligand>
</feature>
<feature type="binding site" evidence="1">
    <location>
        <position position="125"/>
    </location>
    <ligand>
        <name>NAD(+)</name>
        <dbReference type="ChEBI" id="CHEBI:57540"/>
    </ligand>
</feature>
<feature type="binding site" evidence="1">
    <location>
        <position position="136"/>
    </location>
    <ligand>
        <name>7-phospho-2-dehydro-3-deoxy-D-arabino-heptonate</name>
        <dbReference type="ChEBI" id="CHEBI:58394"/>
    </ligand>
</feature>
<feature type="binding site" evidence="1">
    <location>
        <begin position="145"/>
        <end position="146"/>
    </location>
    <ligand>
        <name>NAD(+)</name>
        <dbReference type="ChEBI" id="CHEBI:57540"/>
    </ligand>
</feature>
<feature type="binding site" evidence="1">
    <location>
        <position position="152"/>
    </location>
    <ligand>
        <name>7-phospho-2-dehydro-3-deoxy-D-arabino-heptonate</name>
        <dbReference type="ChEBI" id="CHEBI:58394"/>
    </ligand>
</feature>
<feature type="binding site" evidence="1">
    <location>
        <position position="158"/>
    </location>
    <ligand>
        <name>7-phospho-2-dehydro-3-deoxy-D-arabino-heptonate</name>
        <dbReference type="ChEBI" id="CHEBI:58394"/>
    </ligand>
</feature>
<feature type="binding site" evidence="1">
    <location>
        <position position="167"/>
    </location>
    <ligand>
        <name>NAD(+)</name>
        <dbReference type="ChEBI" id="CHEBI:57540"/>
    </ligand>
</feature>
<feature type="binding site" evidence="1">
    <location>
        <position position="168"/>
    </location>
    <ligand>
        <name>7-phospho-2-dehydro-3-deoxy-D-arabino-heptonate</name>
        <dbReference type="ChEBI" id="CHEBI:58394"/>
    </ligand>
</feature>
<feature type="binding site" evidence="1">
    <location>
        <begin position="185"/>
        <end position="188"/>
    </location>
    <ligand>
        <name>NAD(+)</name>
        <dbReference type="ChEBI" id="CHEBI:57540"/>
    </ligand>
</feature>
<feature type="binding site" evidence="1">
    <location>
        <position position="196"/>
    </location>
    <ligand>
        <name>NAD(+)</name>
        <dbReference type="ChEBI" id="CHEBI:57540"/>
    </ligand>
</feature>
<feature type="binding site" evidence="1">
    <location>
        <begin position="200"/>
        <end position="203"/>
    </location>
    <ligand>
        <name>7-phospho-2-dehydro-3-deoxy-D-arabino-heptonate</name>
        <dbReference type="ChEBI" id="CHEBI:58394"/>
    </ligand>
</feature>
<feature type="binding site" evidence="1">
    <location>
        <position position="200"/>
    </location>
    <ligand>
        <name>Zn(2+)</name>
        <dbReference type="ChEBI" id="CHEBI:29105"/>
        <note>catalytic</note>
    </ligand>
</feature>
<feature type="binding site" evidence="1">
    <location>
        <position position="260"/>
    </location>
    <ligand>
        <name>7-phospho-2-dehydro-3-deoxy-D-arabino-heptonate</name>
        <dbReference type="ChEBI" id="CHEBI:58394"/>
    </ligand>
</feature>
<feature type="binding site" evidence="1">
    <location>
        <begin position="274"/>
        <end position="278"/>
    </location>
    <ligand>
        <name>7-phospho-2-dehydro-3-deoxy-D-arabino-heptonate</name>
        <dbReference type="ChEBI" id="CHEBI:58394"/>
    </ligand>
</feature>
<feature type="binding site" evidence="1">
    <location>
        <position position="281"/>
    </location>
    <ligand>
        <name>7-phospho-2-dehydro-3-deoxy-D-arabino-heptonate</name>
        <dbReference type="ChEBI" id="CHEBI:58394"/>
    </ligand>
</feature>
<feature type="binding site" evidence="1">
    <location>
        <position position="281"/>
    </location>
    <ligand>
        <name>Zn(2+)</name>
        <dbReference type="ChEBI" id="CHEBI:29105"/>
        <note>catalytic</note>
    </ligand>
</feature>
<feature type="binding site" evidence="1">
    <location>
        <position position="297"/>
    </location>
    <ligand>
        <name>7-phospho-2-dehydro-3-deoxy-D-arabino-heptonate</name>
        <dbReference type="ChEBI" id="CHEBI:58394"/>
    </ligand>
</feature>
<feature type="binding site" evidence="1">
    <location>
        <position position="297"/>
    </location>
    <ligand>
        <name>Zn(2+)</name>
        <dbReference type="ChEBI" id="CHEBI:29105"/>
        <note>catalytic</note>
    </ligand>
</feature>
<feature type="binding site" evidence="1">
    <location>
        <position position="366"/>
    </location>
    <ligand>
        <name>7-phospho-2-dehydro-3-deoxy-D-arabino-heptonate</name>
        <dbReference type="ChEBI" id="CHEBI:58394"/>
    </ligand>
</feature>
<feature type="binding site" evidence="1">
    <location>
        <begin position="892"/>
        <end position="899"/>
    </location>
    <ligand>
        <name>ATP</name>
        <dbReference type="ChEBI" id="CHEBI:30616"/>
    </ligand>
</feature>
<sequence>MAVADDTKADLLKVSILGKESIHCGFHLTPYIVQTVLTTLPSSTYVLITDDNIAKLHLNKFEEAFAKGIEKSAANPKPRFLSHVIPPGETSKSREGKARIEDFLLFHKCTRDSVILALGGGVIGDLVGFVAATFMRGVRFCQIPTTLLAMVDSSVGGKTAIDTPHGKNLIGAFWQPEYIFIDAAYLETLPTREFSNGMAEVVKTAAIWDEKEFTSLESRSAELFAAIQTPSTNYAGRTLETRSEAQKLLLSTIAASIGVKAHIVTIDERETGLRNLVNFGHSIGHAIEAVLTPTILHGECVSIGMILEAELSRQLGILTQVGVGRLTRCLKAYNLPTSLSAPLIASLPQASLLTVPRLLDIMRIDKKNSGTNKKIVLLKRIGETYEQKASIVEDKAIEKTLAEAVTVVPSIPTGNVKGSPGEVRMSTPGSKSISNRALVLAALAKGTCRLRNLLHSDDTQGAVFTWEDGGETLVVEGGEGTLTVPTPGKELYLGNAGTAARFLTTVCALAQPAPASVQPPSTNTVITGNARMKQRPIGPLVDALRANGCSIGYRESEGCLPLSIPPNSFKGGKIQLAASVSSQYVSSILLCAPYAQDANGVTLELVGGEVISQPYIDMTIAMMKTFGVEVTRRTDASGKLLDIYDIPRGTYVNPPVYNIESDASSATYPLAVAAITGTKCTIENIGSSSLQGDAKFAVEVLQKMGCEVHQTADETTVQGPPLGQLKAIEEVDMEVMTDAFLTASVLAAVANGGENKAMKITGIANQRVKECNRIRAMMDELAKFGVHTTEQELGLTIYAVPISQLKKNVSVHCYDDHRVAMAFSVLSTVVEGAIIEEKRCVEKTWPGWWDDLENKIGIKVEGVDLAGLRAESSSAGVKESKPIDNSSILLIGMRGTGKTHIGQLAAASLPGWSFVDADHYFESKLKTGVKDFVKNEGWEKFREEELAVLAELIGLGVDGKAVSSPSSYSKNHVISLGGGIVETPAARSLLKAYLAKGGRVVHITRPIDEIVRYLNVETARPAYEEPILDVWKRREPWYKECSGWEFGNVVVEAPQGQAQAANVEAGPGKTKCVKTLAGRNEVKRFFGHLAGINPNFTHGGSVEGQQRRTYFLCLTYPDVRHAFPYIDELTEGADALELRVDLLKDAKAPEAPFPSVAYVKDQVTALRRVTGLPIIYTVRTKAQGGAFPDGNAKEYKELVEAGVRLGVEYLDVEVASIFSDKEVADLSKRTKKAGSTLVIASWHDWSGKMQWDGEDVKRKYDEARKFGDLVKIVGKAEKLEDNFKLLSFVKSATSLPNSPPIIAINMSTLGQSSRILNTTFTPVSHPLLPTKAAPGQLSFKQIQQALHLLGLLPSKHFHLFGTPIAHSMSPTLHNTGFELLGLPFKYGLLESKEVDCKEVRDVISDKEGFGGASVTIPFKVDVIELLDELTESAKEIGAVNTIIPVHRSSINAQGQEETTRVLVGDNTDWVGIRVCITQRVSEGELRNENTSGLVIGAGGTARAAIYALQDLGVPVIYLFNRTKEKAEDLAKAFVGGADKKWNGQLVVLDKLGGGWGDVGVAPRVIVSTVPASATALPSASTAAIAGQVDKSTNQIVLPADVFAYTSGSAVVVDMAYKPAETPLLKLAKELKEEGNWACVQGLEVLLEQGYIQFEKWTGRRCPKEQVSTRVWEKYGEV</sequence>
<accession>A8NMB4</accession>
<organism>
    <name type="scientific">Coprinopsis cinerea (strain Okayama-7 / 130 / ATCC MYA-4618 / FGSC 9003)</name>
    <name type="common">Inky cap fungus</name>
    <name type="synonym">Hormographiella aspergillata</name>
    <dbReference type="NCBI Taxonomy" id="240176"/>
    <lineage>
        <taxon>Eukaryota</taxon>
        <taxon>Fungi</taxon>
        <taxon>Dikarya</taxon>
        <taxon>Basidiomycota</taxon>
        <taxon>Agaricomycotina</taxon>
        <taxon>Agaricomycetes</taxon>
        <taxon>Agaricomycetidae</taxon>
        <taxon>Agaricales</taxon>
        <taxon>Agaricineae</taxon>
        <taxon>Psathyrellaceae</taxon>
        <taxon>Coprinopsis</taxon>
    </lineage>
</organism>
<proteinExistence type="inferred from homology"/>
<dbReference type="EC" id="4.2.3.4" evidence="1"/>
<dbReference type="EC" id="2.5.1.19" evidence="1"/>
<dbReference type="EC" id="2.7.1.71" evidence="1"/>
<dbReference type="EC" id="4.2.1.10" evidence="1"/>
<dbReference type="EC" id="1.1.1.25" evidence="1"/>
<dbReference type="EMBL" id="AACS02000012">
    <property type="protein sequence ID" value="EAU86952.2"/>
    <property type="molecule type" value="Genomic_DNA"/>
</dbReference>
<dbReference type="RefSeq" id="XP_001834882.2">
    <property type="nucleotide sequence ID" value="XM_001834830.2"/>
</dbReference>
<dbReference type="SMR" id="A8NMB4"/>
<dbReference type="FunCoup" id="A8NMB4">
    <property type="interactions" value="106"/>
</dbReference>
<dbReference type="STRING" id="240176.A8NMB4"/>
<dbReference type="GeneID" id="6011401"/>
<dbReference type="KEGG" id="cci:CC1G_09809"/>
<dbReference type="VEuPathDB" id="FungiDB:CC1G_09809"/>
<dbReference type="eggNOG" id="KOG0692">
    <property type="taxonomic scope" value="Eukaryota"/>
</dbReference>
<dbReference type="HOGENOM" id="CLU_001201_1_2_1"/>
<dbReference type="InParanoid" id="A8NMB4"/>
<dbReference type="OMA" id="SWANMSW"/>
<dbReference type="OrthoDB" id="197068at2759"/>
<dbReference type="UniPathway" id="UPA00053">
    <property type="reaction ID" value="UER00085"/>
</dbReference>
<dbReference type="UniPathway" id="UPA00053">
    <property type="reaction ID" value="UER00086"/>
</dbReference>
<dbReference type="UniPathway" id="UPA00053">
    <property type="reaction ID" value="UER00087"/>
</dbReference>
<dbReference type="UniPathway" id="UPA00053">
    <property type="reaction ID" value="UER00088"/>
</dbReference>
<dbReference type="UniPathway" id="UPA00053">
    <property type="reaction ID" value="UER00089"/>
</dbReference>
<dbReference type="Proteomes" id="UP000001861">
    <property type="component" value="Unassembled WGS sequence"/>
</dbReference>
<dbReference type="GO" id="GO:0005737">
    <property type="term" value="C:cytoplasm"/>
    <property type="evidence" value="ECO:0007669"/>
    <property type="project" value="UniProtKB-SubCell"/>
</dbReference>
<dbReference type="GO" id="GO:0003855">
    <property type="term" value="F:3-dehydroquinate dehydratase activity"/>
    <property type="evidence" value="ECO:0007669"/>
    <property type="project" value="UniProtKB-UniRule"/>
</dbReference>
<dbReference type="GO" id="GO:0003856">
    <property type="term" value="F:3-dehydroquinate synthase activity"/>
    <property type="evidence" value="ECO:0007669"/>
    <property type="project" value="UniProtKB-UniRule"/>
</dbReference>
<dbReference type="GO" id="GO:0003866">
    <property type="term" value="F:3-phosphoshikimate 1-carboxyvinyltransferase activity"/>
    <property type="evidence" value="ECO:0007669"/>
    <property type="project" value="UniProtKB-UniRule"/>
</dbReference>
<dbReference type="GO" id="GO:0005524">
    <property type="term" value="F:ATP binding"/>
    <property type="evidence" value="ECO:0007669"/>
    <property type="project" value="UniProtKB-UniRule"/>
</dbReference>
<dbReference type="GO" id="GO:0046872">
    <property type="term" value="F:metal ion binding"/>
    <property type="evidence" value="ECO:0007669"/>
    <property type="project" value="UniProtKB-UniRule"/>
</dbReference>
<dbReference type="GO" id="GO:0004764">
    <property type="term" value="F:shikimate 3-dehydrogenase (NADP+) activity"/>
    <property type="evidence" value="ECO:0007669"/>
    <property type="project" value="UniProtKB-UniRule"/>
</dbReference>
<dbReference type="GO" id="GO:0004765">
    <property type="term" value="F:shikimate kinase activity"/>
    <property type="evidence" value="ECO:0007669"/>
    <property type="project" value="UniProtKB-UniRule"/>
</dbReference>
<dbReference type="GO" id="GO:0008652">
    <property type="term" value="P:amino acid biosynthetic process"/>
    <property type="evidence" value="ECO:0007669"/>
    <property type="project" value="UniProtKB-KW"/>
</dbReference>
<dbReference type="GO" id="GO:0009073">
    <property type="term" value="P:aromatic amino acid family biosynthetic process"/>
    <property type="evidence" value="ECO:0007669"/>
    <property type="project" value="UniProtKB-UniRule"/>
</dbReference>
<dbReference type="GO" id="GO:0009423">
    <property type="term" value="P:chorismate biosynthetic process"/>
    <property type="evidence" value="ECO:0007669"/>
    <property type="project" value="UniProtKB-UniRule"/>
</dbReference>
<dbReference type="CDD" id="cd00502">
    <property type="entry name" value="DHQase_I"/>
    <property type="match status" value="1"/>
</dbReference>
<dbReference type="CDD" id="cd08195">
    <property type="entry name" value="DHQS"/>
    <property type="match status" value="1"/>
</dbReference>
<dbReference type="CDD" id="cd01556">
    <property type="entry name" value="EPSP_synthase"/>
    <property type="match status" value="1"/>
</dbReference>
<dbReference type="CDD" id="cd01065">
    <property type="entry name" value="NAD_bind_Shikimate_DH"/>
    <property type="match status" value="1"/>
</dbReference>
<dbReference type="CDD" id="cd00464">
    <property type="entry name" value="SK"/>
    <property type="match status" value="1"/>
</dbReference>
<dbReference type="FunFam" id="1.20.1090.10:FF:000007">
    <property type="entry name" value="Pentafunctional AROM polypeptide"/>
    <property type="match status" value="1"/>
</dbReference>
<dbReference type="FunFam" id="3.20.20.70:FF:000135">
    <property type="entry name" value="Pentafunctional AROM polypeptide"/>
    <property type="match status" value="1"/>
</dbReference>
<dbReference type="FunFam" id="3.40.50.1970:FF:000007">
    <property type="entry name" value="Pentafunctional AROM polypeptide"/>
    <property type="match status" value="1"/>
</dbReference>
<dbReference type="FunFam" id="3.65.10.10:FF:000012">
    <property type="entry name" value="Pentafunctional AROM polypeptide"/>
    <property type="match status" value="1"/>
</dbReference>
<dbReference type="Gene3D" id="3.40.50.1970">
    <property type="match status" value="1"/>
</dbReference>
<dbReference type="Gene3D" id="3.20.20.70">
    <property type="entry name" value="Aldolase class I"/>
    <property type="match status" value="1"/>
</dbReference>
<dbReference type="Gene3D" id="1.20.1090.10">
    <property type="entry name" value="Dehydroquinate synthase-like - alpha domain"/>
    <property type="match status" value="1"/>
</dbReference>
<dbReference type="Gene3D" id="3.65.10.10">
    <property type="entry name" value="Enolpyruvate transferase domain"/>
    <property type="match status" value="2"/>
</dbReference>
<dbReference type="Gene3D" id="3.40.50.10860">
    <property type="entry name" value="Leucine Dehydrogenase, chain A, domain 1"/>
    <property type="match status" value="1"/>
</dbReference>
<dbReference type="Gene3D" id="3.40.50.720">
    <property type="entry name" value="NAD(P)-binding Rossmann-like Domain"/>
    <property type="match status" value="1"/>
</dbReference>
<dbReference type="Gene3D" id="3.40.50.300">
    <property type="entry name" value="P-loop containing nucleotide triphosphate hydrolases"/>
    <property type="match status" value="1"/>
</dbReference>
<dbReference type="HAMAP" id="MF_00210">
    <property type="entry name" value="EPSP_synth"/>
    <property type="match status" value="1"/>
</dbReference>
<dbReference type="HAMAP" id="MF_03143">
    <property type="entry name" value="Pentafunct_AroM"/>
    <property type="match status" value="1"/>
</dbReference>
<dbReference type="HAMAP" id="MF_00109">
    <property type="entry name" value="Shikimate_kinase"/>
    <property type="match status" value="1"/>
</dbReference>
<dbReference type="InterPro" id="IPR013785">
    <property type="entry name" value="Aldolase_TIM"/>
</dbReference>
<dbReference type="InterPro" id="IPR046346">
    <property type="entry name" value="Aminoacid_DH-like_N_sf"/>
</dbReference>
<dbReference type="InterPro" id="IPR016037">
    <property type="entry name" value="DHQ_synth_AroB"/>
</dbReference>
<dbReference type="InterPro" id="IPR030960">
    <property type="entry name" value="DHQS/DOIS_N"/>
</dbReference>
<dbReference type="InterPro" id="IPR056179">
    <property type="entry name" value="DHQS_C"/>
</dbReference>
<dbReference type="InterPro" id="IPR001381">
    <property type="entry name" value="DHquinase_I"/>
</dbReference>
<dbReference type="InterPro" id="IPR001986">
    <property type="entry name" value="Enolpyruvate_Tfrase_dom"/>
</dbReference>
<dbReference type="InterPro" id="IPR036968">
    <property type="entry name" value="Enolpyruvate_Tfrase_sf"/>
</dbReference>
<dbReference type="InterPro" id="IPR006264">
    <property type="entry name" value="EPSP_synthase"/>
</dbReference>
<dbReference type="InterPro" id="IPR023193">
    <property type="entry name" value="EPSP_synthase_CS"/>
</dbReference>
<dbReference type="InterPro" id="IPR036291">
    <property type="entry name" value="NAD(P)-bd_dom_sf"/>
</dbReference>
<dbReference type="InterPro" id="IPR027417">
    <property type="entry name" value="P-loop_NTPase"/>
</dbReference>
<dbReference type="InterPro" id="IPR008289">
    <property type="entry name" value="Pentafunct_AroM"/>
</dbReference>
<dbReference type="InterPro" id="IPR013792">
    <property type="entry name" value="RNA3'P_cycl/enolpyr_Trfase_a/b"/>
</dbReference>
<dbReference type="InterPro" id="IPR041121">
    <property type="entry name" value="SDH_C"/>
</dbReference>
<dbReference type="InterPro" id="IPR031322">
    <property type="entry name" value="Shikimate/glucono_kinase"/>
</dbReference>
<dbReference type="InterPro" id="IPR013708">
    <property type="entry name" value="Shikimate_DH-bd_N"/>
</dbReference>
<dbReference type="InterPro" id="IPR010110">
    <property type="entry name" value="Shikimate_DH_AroM-type"/>
</dbReference>
<dbReference type="InterPro" id="IPR000623">
    <property type="entry name" value="Shikimate_kinase/TSH1"/>
</dbReference>
<dbReference type="NCBIfam" id="TIGR01356">
    <property type="entry name" value="aroA"/>
    <property type="match status" value="1"/>
</dbReference>
<dbReference type="NCBIfam" id="TIGR01357">
    <property type="entry name" value="aroB"/>
    <property type="match status" value="1"/>
</dbReference>
<dbReference type="NCBIfam" id="TIGR01093">
    <property type="entry name" value="aroD"/>
    <property type="match status" value="1"/>
</dbReference>
<dbReference type="NCBIfam" id="TIGR01809">
    <property type="entry name" value="Shik-DH-AROM"/>
    <property type="match status" value="1"/>
</dbReference>
<dbReference type="PANTHER" id="PTHR21090">
    <property type="entry name" value="AROM/DEHYDROQUINATE SYNTHASE"/>
    <property type="match status" value="1"/>
</dbReference>
<dbReference type="PANTHER" id="PTHR21090:SF5">
    <property type="entry name" value="PENTAFUNCTIONAL AROM POLYPEPTIDE"/>
    <property type="match status" value="1"/>
</dbReference>
<dbReference type="Pfam" id="PF01761">
    <property type="entry name" value="DHQ_synthase"/>
    <property type="match status" value="1"/>
</dbReference>
<dbReference type="Pfam" id="PF24621">
    <property type="entry name" value="DHQS_C"/>
    <property type="match status" value="1"/>
</dbReference>
<dbReference type="Pfam" id="PF01487">
    <property type="entry name" value="DHquinase_I"/>
    <property type="match status" value="1"/>
</dbReference>
<dbReference type="Pfam" id="PF00275">
    <property type="entry name" value="EPSP_synthase"/>
    <property type="match status" value="1"/>
</dbReference>
<dbReference type="Pfam" id="PF18317">
    <property type="entry name" value="SDH_C"/>
    <property type="match status" value="1"/>
</dbReference>
<dbReference type="Pfam" id="PF08501">
    <property type="entry name" value="Shikimate_dh_N"/>
    <property type="match status" value="1"/>
</dbReference>
<dbReference type="Pfam" id="PF01202">
    <property type="entry name" value="SKI"/>
    <property type="match status" value="1"/>
</dbReference>
<dbReference type="PIRSF" id="PIRSF000514">
    <property type="entry name" value="Pentafunct_AroM"/>
    <property type="match status" value="1"/>
</dbReference>
<dbReference type="SUPFAM" id="SSF51569">
    <property type="entry name" value="Aldolase"/>
    <property type="match status" value="1"/>
</dbReference>
<dbReference type="SUPFAM" id="SSF53223">
    <property type="entry name" value="Aminoacid dehydrogenase-like, N-terminal domain"/>
    <property type="match status" value="1"/>
</dbReference>
<dbReference type="SUPFAM" id="SSF56796">
    <property type="entry name" value="Dehydroquinate synthase-like"/>
    <property type="match status" value="1"/>
</dbReference>
<dbReference type="SUPFAM" id="SSF55205">
    <property type="entry name" value="EPT/RTPC-like"/>
    <property type="match status" value="1"/>
</dbReference>
<dbReference type="SUPFAM" id="SSF51735">
    <property type="entry name" value="NAD(P)-binding Rossmann-fold domains"/>
    <property type="match status" value="1"/>
</dbReference>
<dbReference type="SUPFAM" id="SSF52540">
    <property type="entry name" value="P-loop containing nucleoside triphosphate hydrolases"/>
    <property type="match status" value="1"/>
</dbReference>
<dbReference type="PROSITE" id="PS00104">
    <property type="entry name" value="EPSP_SYNTHASE_1"/>
    <property type="match status" value="1"/>
</dbReference>
<dbReference type="PROSITE" id="PS00885">
    <property type="entry name" value="EPSP_SYNTHASE_2"/>
    <property type="match status" value="1"/>
</dbReference>
<protein>
    <recommendedName>
        <fullName evidence="1">Pentafunctional AROM polypeptide</fullName>
    </recommendedName>
    <domain>
        <recommendedName>
            <fullName evidence="1">3-dehydroquinate synthase</fullName>
            <shortName evidence="1">DHQS</shortName>
            <ecNumber evidence="1">4.2.3.4</ecNumber>
        </recommendedName>
    </domain>
    <domain>
        <recommendedName>
            <fullName evidence="1">3-phosphoshikimate 1-carboxyvinyltransferase</fullName>
            <ecNumber evidence="1">2.5.1.19</ecNumber>
        </recommendedName>
        <alternativeName>
            <fullName evidence="1">5-enolpyruvylshikimate-3-phosphate synthase</fullName>
            <shortName evidence="1">EPSP synthase</shortName>
            <shortName evidence="1">EPSPS</shortName>
        </alternativeName>
    </domain>
    <domain>
        <recommendedName>
            <fullName evidence="1">Shikimate kinase</fullName>
            <shortName evidence="1">SK</shortName>
            <ecNumber evidence="1">2.7.1.71</ecNumber>
        </recommendedName>
    </domain>
    <domain>
        <recommendedName>
            <fullName evidence="1">3-dehydroquinate dehydratase</fullName>
            <shortName evidence="1">3-dehydroquinase</shortName>
            <ecNumber evidence="1">4.2.1.10</ecNumber>
        </recommendedName>
    </domain>
    <domain>
        <recommendedName>
            <fullName evidence="1">Shikimate dehydrogenase</fullName>
            <ecNumber evidence="1">1.1.1.25</ecNumber>
        </recommendedName>
    </domain>
</protein>
<evidence type="ECO:0000255" key="1">
    <source>
        <dbReference type="HAMAP-Rule" id="MF_03143"/>
    </source>
</evidence>
<keyword id="KW-0028">Amino-acid biosynthesis</keyword>
<keyword id="KW-0057">Aromatic amino acid biosynthesis</keyword>
<keyword id="KW-0067">ATP-binding</keyword>
<keyword id="KW-0963">Cytoplasm</keyword>
<keyword id="KW-0418">Kinase</keyword>
<keyword id="KW-0456">Lyase</keyword>
<keyword id="KW-0479">Metal-binding</keyword>
<keyword id="KW-0511">Multifunctional enzyme</keyword>
<keyword id="KW-0521">NADP</keyword>
<keyword id="KW-0547">Nucleotide-binding</keyword>
<keyword id="KW-0560">Oxidoreductase</keyword>
<keyword id="KW-1185">Reference proteome</keyword>
<keyword id="KW-0808">Transferase</keyword>
<keyword id="KW-0862">Zinc</keyword>
<comment type="function">
    <text evidence="1">The AROM polypeptide catalyzes 5 consecutive enzymatic reactions in prechorismate polyaromatic amino acid biosynthesis.</text>
</comment>
<comment type="catalytic activity">
    <reaction evidence="1">
        <text>7-phospho-2-dehydro-3-deoxy-D-arabino-heptonate = 3-dehydroquinate + phosphate</text>
        <dbReference type="Rhea" id="RHEA:21968"/>
        <dbReference type="ChEBI" id="CHEBI:32364"/>
        <dbReference type="ChEBI" id="CHEBI:43474"/>
        <dbReference type="ChEBI" id="CHEBI:58394"/>
        <dbReference type="EC" id="4.2.3.4"/>
    </reaction>
</comment>
<comment type="catalytic activity">
    <reaction evidence="1">
        <text>3-dehydroquinate = 3-dehydroshikimate + H2O</text>
        <dbReference type="Rhea" id="RHEA:21096"/>
        <dbReference type="ChEBI" id="CHEBI:15377"/>
        <dbReference type="ChEBI" id="CHEBI:16630"/>
        <dbReference type="ChEBI" id="CHEBI:32364"/>
        <dbReference type="EC" id="4.2.1.10"/>
    </reaction>
</comment>
<comment type="catalytic activity">
    <reaction evidence="1">
        <text>shikimate + NADP(+) = 3-dehydroshikimate + NADPH + H(+)</text>
        <dbReference type="Rhea" id="RHEA:17737"/>
        <dbReference type="ChEBI" id="CHEBI:15378"/>
        <dbReference type="ChEBI" id="CHEBI:16630"/>
        <dbReference type="ChEBI" id="CHEBI:36208"/>
        <dbReference type="ChEBI" id="CHEBI:57783"/>
        <dbReference type="ChEBI" id="CHEBI:58349"/>
        <dbReference type="EC" id="1.1.1.25"/>
    </reaction>
</comment>
<comment type="catalytic activity">
    <reaction evidence="1">
        <text>shikimate + ATP = 3-phosphoshikimate + ADP + H(+)</text>
        <dbReference type="Rhea" id="RHEA:13121"/>
        <dbReference type="ChEBI" id="CHEBI:15378"/>
        <dbReference type="ChEBI" id="CHEBI:30616"/>
        <dbReference type="ChEBI" id="CHEBI:36208"/>
        <dbReference type="ChEBI" id="CHEBI:145989"/>
        <dbReference type="ChEBI" id="CHEBI:456216"/>
        <dbReference type="EC" id="2.7.1.71"/>
    </reaction>
</comment>
<comment type="catalytic activity">
    <reaction evidence="1">
        <text>3-phosphoshikimate + phosphoenolpyruvate = 5-O-(1-carboxyvinyl)-3-phosphoshikimate + phosphate</text>
        <dbReference type="Rhea" id="RHEA:21256"/>
        <dbReference type="ChEBI" id="CHEBI:43474"/>
        <dbReference type="ChEBI" id="CHEBI:57701"/>
        <dbReference type="ChEBI" id="CHEBI:58702"/>
        <dbReference type="ChEBI" id="CHEBI:145989"/>
        <dbReference type="EC" id="2.5.1.19"/>
    </reaction>
</comment>
<comment type="cofactor">
    <cofactor>
        <name>Zn(2+)</name>
        <dbReference type="ChEBI" id="CHEBI:29105"/>
    </cofactor>
    <text>Binds 2 Zn(2+) ions per subunit.</text>
</comment>
<comment type="pathway">
    <text evidence="1">Metabolic intermediate biosynthesis; chorismate biosynthesis; chorismate from D-erythrose 4-phosphate and phosphoenolpyruvate: step 2/7.</text>
</comment>
<comment type="pathway">
    <text evidence="1">Metabolic intermediate biosynthesis; chorismate biosynthesis; chorismate from D-erythrose 4-phosphate and phosphoenolpyruvate: step 3/7.</text>
</comment>
<comment type="pathway">
    <text evidence="1">Metabolic intermediate biosynthesis; chorismate biosynthesis; chorismate from D-erythrose 4-phosphate and phosphoenolpyruvate: step 4/7.</text>
</comment>
<comment type="pathway">
    <text evidence="1">Metabolic intermediate biosynthesis; chorismate biosynthesis; chorismate from D-erythrose 4-phosphate and phosphoenolpyruvate: step 5/7.</text>
</comment>
<comment type="pathway">
    <text evidence="1">Metabolic intermediate biosynthesis; chorismate biosynthesis; chorismate from D-erythrose 4-phosphate and phosphoenolpyruvate: step 6/7.</text>
</comment>
<comment type="subunit">
    <text evidence="1">Homodimer.</text>
</comment>
<comment type="subcellular location">
    <subcellularLocation>
        <location evidence="1">Cytoplasm</location>
    </subcellularLocation>
</comment>
<comment type="similarity">
    <text evidence="1">In the N-terminal section; belongs to the sugar phosphate cyclases superfamily. Dehydroquinate synthase family.</text>
</comment>
<comment type="similarity">
    <text evidence="1">In the 2nd section; belongs to the EPSP synthase family.</text>
</comment>
<comment type="similarity">
    <text evidence="1">In the 3rd section; belongs to the shikimate kinase family.</text>
</comment>
<comment type="similarity">
    <text evidence="1">In the 4th section; belongs to the type-I 3-dehydroquinase family.</text>
</comment>
<comment type="similarity">
    <text evidence="1">In the C-terminal section; belongs to the shikimate dehydrogenase family.</text>
</comment>
<name>ARO1_COPC7</name>
<gene>
    <name type="ORF">CC1G_09809</name>
</gene>
<reference key="1">
    <citation type="journal article" date="2010" name="Proc. Natl. Acad. Sci. U.S.A.">
        <title>Insights into evolution of multicellular fungi from the assembled chromosomes of the mushroom Coprinopsis cinerea (Coprinus cinereus).</title>
        <authorList>
            <person name="Stajich J.E."/>
            <person name="Wilke S.K."/>
            <person name="Ahren D."/>
            <person name="Au C.H."/>
            <person name="Birren B.W."/>
            <person name="Borodovsky M."/>
            <person name="Burns C."/>
            <person name="Canbaeck B."/>
            <person name="Casselton L.A."/>
            <person name="Cheng C.K."/>
            <person name="Deng J."/>
            <person name="Dietrich F.S."/>
            <person name="Fargo D.C."/>
            <person name="Farman M.L."/>
            <person name="Gathman A.C."/>
            <person name="Goldberg J."/>
            <person name="Guigo R."/>
            <person name="Hoegger P.J."/>
            <person name="Hooker J.B."/>
            <person name="Huggins A."/>
            <person name="James T.Y."/>
            <person name="Kamada T."/>
            <person name="Kilaru S."/>
            <person name="Kodira C."/>
            <person name="Kuees U."/>
            <person name="Kupfer D."/>
            <person name="Kwan H.S."/>
            <person name="Lomsadze A."/>
            <person name="Li W."/>
            <person name="Lilly W.W."/>
            <person name="Ma L.-J."/>
            <person name="Mackey A.J."/>
            <person name="Manning G."/>
            <person name="Martin F."/>
            <person name="Muraguchi H."/>
            <person name="Natvig D.O."/>
            <person name="Palmerini H."/>
            <person name="Ramesh M.A."/>
            <person name="Rehmeyer C.J."/>
            <person name="Roe B.A."/>
            <person name="Shenoy N."/>
            <person name="Stanke M."/>
            <person name="Ter-Hovhannisyan V."/>
            <person name="Tunlid A."/>
            <person name="Velagapudi R."/>
            <person name="Vision T.J."/>
            <person name="Zeng Q."/>
            <person name="Zolan M.E."/>
            <person name="Pukkila P.J."/>
        </authorList>
    </citation>
    <scope>NUCLEOTIDE SEQUENCE [LARGE SCALE GENOMIC DNA]</scope>
    <source>
        <strain>Okayama-7 / 130 / ATCC MYA-4618 / FGSC 9003</strain>
    </source>
</reference>